<organism>
    <name type="scientific">Prochlorococcus marinus (strain NATL2A)</name>
    <dbReference type="NCBI Taxonomy" id="59920"/>
    <lineage>
        <taxon>Bacteria</taxon>
        <taxon>Bacillati</taxon>
        <taxon>Cyanobacteriota</taxon>
        <taxon>Cyanophyceae</taxon>
        <taxon>Synechococcales</taxon>
        <taxon>Prochlorococcaceae</taxon>
        <taxon>Prochlorococcus</taxon>
    </lineage>
</organism>
<comment type="function">
    <text evidence="1">Catalyzes the ATP-dependent conversion of 7-carboxy-7-deazaguanine (CDG) to 7-cyano-7-deazaguanine (preQ(0)).</text>
</comment>
<comment type="catalytic activity">
    <reaction evidence="1">
        <text>7-carboxy-7-deazaguanine + NH4(+) + ATP = 7-cyano-7-deazaguanine + ADP + phosphate + H2O + H(+)</text>
        <dbReference type="Rhea" id="RHEA:27982"/>
        <dbReference type="ChEBI" id="CHEBI:15377"/>
        <dbReference type="ChEBI" id="CHEBI:15378"/>
        <dbReference type="ChEBI" id="CHEBI:28938"/>
        <dbReference type="ChEBI" id="CHEBI:30616"/>
        <dbReference type="ChEBI" id="CHEBI:43474"/>
        <dbReference type="ChEBI" id="CHEBI:45075"/>
        <dbReference type="ChEBI" id="CHEBI:61036"/>
        <dbReference type="ChEBI" id="CHEBI:456216"/>
        <dbReference type="EC" id="6.3.4.20"/>
    </reaction>
</comment>
<comment type="cofactor">
    <cofactor evidence="1">
        <name>Zn(2+)</name>
        <dbReference type="ChEBI" id="CHEBI:29105"/>
    </cofactor>
    <text evidence="1">Binds 1 zinc ion per subunit.</text>
</comment>
<comment type="pathway">
    <text evidence="1">Purine metabolism; 7-cyano-7-deazaguanine biosynthesis.</text>
</comment>
<comment type="similarity">
    <text evidence="1">Belongs to the QueC family.</text>
</comment>
<keyword id="KW-0067">ATP-binding</keyword>
<keyword id="KW-0436">Ligase</keyword>
<keyword id="KW-0479">Metal-binding</keyword>
<keyword id="KW-0547">Nucleotide-binding</keyword>
<keyword id="KW-0671">Queuosine biosynthesis</keyword>
<keyword id="KW-1185">Reference proteome</keyword>
<keyword id="KW-0862">Zinc</keyword>
<dbReference type="EC" id="6.3.4.20" evidence="1"/>
<dbReference type="EMBL" id="CP000095">
    <property type="protein sequence ID" value="AAZ58783.1"/>
    <property type="molecule type" value="Genomic_DNA"/>
</dbReference>
<dbReference type="RefSeq" id="WP_011295637.1">
    <property type="nucleotide sequence ID" value="NC_007335.2"/>
</dbReference>
<dbReference type="SMR" id="Q46I95"/>
<dbReference type="STRING" id="59920.PMN2A_1293"/>
<dbReference type="DNASU" id="3606688"/>
<dbReference type="KEGG" id="pmn:PMN2A_1293"/>
<dbReference type="HOGENOM" id="CLU_081854_1_0_3"/>
<dbReference type="OrthoDB" id="9789567at2"/>
<dbReference type="PhylomeDB" id="Q46I95"/>
<dbReference type="UniPathway" id="UPA00391"/>
<dbReference type="Proteomes" id="UP000002535">
    <property type="component" value="Chromosome"/>
</dbReference>
<dbReference type="GO" id="GO:0005524">
    <property type="term" value="F:ATP binding"/>
    <property type="evidence" value="ECO:0007669"/>
    <property type="project" value="UniProtKB-UniRule"/>
</dbReference>
<dbReference type="GO" id="GO:0016879">
    <property type="term" value="F:ligase activity, forming carbon-nitrogen bonds"/>
    <property type="evidence" value="ECO:0007669"/>
    <property type="project" value="UniProtKB-UniRule"/>
</dbReference>
<dbReference type="GO" id="GO:0008270">
    <property type="term" value="F:zinc ion binding"/>
    <property type="evidence" value="ECO:0007669"/>
    <property type="project" value="UniProtKB-UniRule"/>
</dbReference>
<dbReference type="GO" id="GO:0008616">
    <property type="term" value="P:queuosine biosynthetic process"/>
    <property type="evidence" value="ECO:0007669"/>
    <property type="project" value="UniProtKB-UniRule"/>
</dbReference>
<dbReference type="CDD" id="cd01995">
    <property type="entry name" value="QueC-like"/>
    <property type="match status" value="1"/>
</dbReference>
<dbReference type="Gene3D" id="3.40.50.620">
    <property type="entry name" value="HUPs"/>
    <property type="match status" value="1"/>
</dbReference>
<dbReference type="HAMAP" id="MF_01633">
    <property type="entry name" value="QueC"/>
    <property type="match status" value="1"/>
</dbReference>
<dbReference type="InterPro" id="IPR018317">
    <property type="entry name" value="QueC"/>
</dbReference>
<dbReference type="InterPro" id="IPR014729">
    <property type="entry name" value="Rossmann-like_a/b/a_fold"/>
</dbReference>
<dbReference type="NCBIfam" id="TIGR00364">
    <property type="entry name" value="7-cyano-7-deazaguanine synthase QueC"/>
    <property type="match status" value="1"/>
</dbReference>
<dbReference type="PANTHER" id="PTHR42914">
    <property type="entry name" value="7-CYANO-7-DEAZAGUANINE SYNTHASE"/>
    <property type="match status" value="1"/>
</dbReference>
<dbReference type="PANTHER" id="PTHR42914:SF1">
    <property type="entry name" value="7-CYANO-7-DEAZAGUANINE SYNTHASE"/>
    <property type="match status" value="1"/>
</dbReference>
<dbReference type="Pfam" id="PF06508">
    <property type="entry name" value="QueC"/>
    <property type="match status" value="1"/>
</dbReference>
<dbReference type="PIRSF" id="PIRSF006293">
    <property type="entry name" value="ExsB"/>
    <property type="match status" value="1"/>
</dbReference>
<dbReference type="SUPFAM" id="SSF52402">
    <property type="entry name" value="Adenine nucleotide alpha hydrolases-like"/>
    <property type="match status" value="1"/>
</dbReference>
<gene>
    <name evidence="1" type="primary">queC</name>
    <name type="ordered locus">PMN2A_1293</name>
</gene>
<reference key="1">
    <citation type="journal article" date="2007" name="PLoS Genet.">
        <title>Patterns and implications of gene gain and loss in the evolution of Prochlorococcus.</title>
        <authorList>
            <person name="Kettler G.C."/>
            <person name="Martiny A.C."/>
            <person name="Huang K."/>
            <person name="Zucker J."/>
            <person name="Coleman M.L."/>
            <person name="Rodrigue S."/>
            <person name="Chen F."/>
            <person name="Lapidus A."/>
            <person name="Ferriera S."/>
            <person name="Johnson J."/>
            <person name="Steglich C."/>
            <person name="Church G.M."/>
            <person name="Richardson P."/>
            <person name="Chisholm S.W."/>
        </authorList>
    </citation>
    <scope>NUCLEOTIDE SEQUENCE [LARGE SCALE GENOMIC DNA]</scope>
    <source>
        <strain>NATL2A</strain>
    </source>
</reference>
<name>QUEC_PROMT</name>
<accession>Q46I95</accession>
<feature type="chain" id="PRO_0000246881" description="7-cyano-7-deazaguanine synthase">
    <location>
        <begin position="1"/>
        <end position="225"/>
    </location>
</feature>
<feature type="binding site" evidence="1">
    <location>
        <begin position="10"/>
        <end position="20"/>
    </location>
    <ligand>
        <name>ATP</name>
        <dbReference type="ChEBI" id="CHEBI:30616"/>
    </ligand>
</feature>
<feature type="binding site" evidence="1">
    <location>
        <position position="191"/>
    </location>
    <ligand>
        <name>Zn(2+)</name>
        <dbReference type="ChEBI" id="CHEBI:29105"/>
    </ligand>
</feature>
<feature type="binding site" evidence="1">
    <location>
        <position position="199"/>
    </location>
    <ligand>
        <name>Zn(2+)</name>
        <dbReference type="ChEBI" id="CHEBI:29105"/>
    </ligand>
</feature>
<feature type="binding site" evidence="1">
    <location>
        <position position="202"/>
    </location>
    <ligand>
        <name>Zn(2+)</name>
        <dbReference type="ChEBI" id="CHEBI:29105"/>
    </ligand>
</feature>
<feature type="binding site" evidence="1">
    <location>
        <position position="205"/>
    </location>
    <ligand>
        <name>Zn(2+)</name>
        <dbReference type="ChEBI" id="CHEBI:29105"/>
    </ligand>
</feature>
<proteinExistence type="inferred from homology"/>
<sequence length="225" mass="24632">MIEHTTIALLSGGIDSATAACIAMEAGQKVIGLSFDYGQRHLKELQAAADLAKNLNLEDHITIKIDLSSWGGSSLTDTSQAIPTQGIQKNTIPNTYVPGRNTIFVAIGLSLAEARGANRIALGINAMDYSGYPDCRPDYLKAYQELANLSSRVGREGNGIKLWAPLLDWEKTKIFEEALRLKIPIEKTWSCYQGESKPCGKCDSCRIRDKALKEIGREDLCSQNI</sequence>
<protein>
    <recommendedName>
        <fullName evidence="1">7-cyano-7-deazaguanine synthase</fullName>
        <ecNumber evidence="1">6.3.4.20</ecNumber>
    </recommendedName>
    <alternativeName>
        <fullName evidence="1">7-cyano-7-carbaguanine synthase</fullName>
    </alternativeName>
    <alternativeName>
        <fullName evidence="1">PreQ(0) synthase</fullName>
    </alternativeName>
    <alternativeName>
        <fullName evidence="1">Queuosine biosynthesis protein QueC</fullName>
    </alternativeName>
</protein>
<evidence type="ECO:0000255" key="1">
    <source>
        <dbReference type="HAMAP-Rule" id="MF_01633"/>
    </source>
</evidence>